<reference key="1">
    <citation type="journal article" date="1995" name="Science">
        <title>The minimal gene complement of Mycoplasma genitalium.</title>
        <authorList>
            <person name="Fraser C.M."/>
            <person name="Gocayne J.D."/>
            <person name="White O."/>
            <person name="Adams M.D."/>
            <person name="Clayton R.A."/>
            <person name="Fleischmann R.D."/>
            <person name="Bult C.J."/>
            <person name="Kerlavage A.R."/>
            <person name="Sutton G.G."/>
            <person name="Kelley J.M."/>
            <person name="Fritchman J.L."/>
            <person name="Weidman J.F."/>
            <person name="Small K.V."/>
            <person name="Sandusky M."/>
            <person name="Fuhrmann J.L."/>
            <person name="Nguyen D.T."/>
            <person name="Utterback T.R."/>
            <person name="Saudek D.M."/>
            <person name="Phillips C.A."/>
            <person name="Merrick J.M."/>
            <person name="Tomb J.-F."/>
            <person name="Dougherty B.A."/>
            <person name="Bott K.F."/>
            <person name="Hu P.-C."/>
            <person name="Lucier T.S."/>
            <person name="Peterson S.N."/>
            <person name="Smith H.O."/>
            <person name="Hutchison C.A. III"/>
            <person name="Venter J.C."/>
        </authorList>
    </citation>
    <scope>NUCLEOTIDE SEQUENCE [LARGE SCALE GENOMIC DNA]</scope>
    <source>
        <strain>ATCC 33530 / DSM 19775 / NCTC 10195 / G37</strain>
    </source>
</reference>
<reference key="2">
    <citation type="journal article" date="1993" name="J. Bacteriol.">
        <title>A survey of the Mycoplasma genitalium genome by using random sequencing.</title>
        <authorList>
            <person name="Peterson S.N."/>
            <person name="Hu P.-C."/>
            <person name="Bott K.F."/>
            <person name="Hutchison C.A. III"/>
        </authorList>
    </citation>
    <scope>NUCLEOTIDE SEQUENCE [GENOMIC DNA] OF 242-308</scope>
    <source>
        <strain>ATCC 33530 / DSM 19775 / NCTC 10195 / G37</strain>
    </source>
</reference>
<protein>
    <recommendedName>
        <fullName>Putative proline iminopeptidase</fullName>
        <shortName>PIP</shortName>
        <ecNumber>3.4.11.5</ecNumber>
    </recommendedName>
    <alternativeName>
        <fullName>Prolyl aminopeptidase</fullName>
        <shortName>PAP</shortName>
    </alternativeName>
</protein>
<name>PIP_MYCGE</name>
<accession>P47266</accession>
<gene>
    <name type="primary">pip</name>
    <name type="ordered locus">MG020</name>
</gene>
<proteinExistence type="inferred from homology"/>
<evidence type="ECO:0000250" key="1"/>
<evidence type="ECO:0000255" key="2"/>
<evidence type="ECO:0000305" key="3"/>
<feature type="chain" id="PRO_0000080839" description="Putative proline iminopeptidase">
    <location>
        <begin position="1"/>
        <end position="308"/>
    </location>
</feature>
<feature type="domain" description="AB hydrolase-1" evidence="2">
    <location>
        <begin position="30"/>
        <end position="290"/>
    </location>
</feature>
<feature type="active site" description="Nucleophile" evidence="1">
    <location>
        <position position="105"/>
    </location>
</feature>
<feature type="active site" evidence="1">
    <location>
        <position position="261"/>
    </location>
</feature>
<feature type="active site" description="Proton donor" evidence="1">
    <location>
        <position position="289"/>
    </location>
</feature>
<sequence length="308" mass="35289">MNTKLNVKGYLNVGDNHQLYYWTQGNPNGKPVLYIHGGPGSGTDEGCLKYFDLETTWIILLDQRGCGKSKTNDIFYENNTDKLVSDFEILRQKLNIKNWTLFGGSWGSALALVYAIKHPQVVDKIFLRALFLAREKDWSEALMGLGKMFYPYEHQRFMDSIPKAYQNSYEQIVNYCYDQFQNGDESTKEKLAKAWVDWESTLLSPINKIHSTATDFKLVEKLALLECHYAVNKSFLDENFILDNISVLKNKSIYLAHGRFDLICPLYQPLALKQAFPELQLYVTNNAGHSGSDANNLATIKHLLKTYL</sequence>
<keyword id="KW-0031">Aminopeptidase</keyword>
<keyword id="KW-0963">Cytoplasm</keyword>
<keyword id="KW-0378">Hydrolase</keyword>
<keyword id="KW-0645">Protease</keyword>
<keyword id="KW-1185">Reference proteome</keyword>
<dbReference type="EC" id="3.4.11.5"/>
<dbReference type="EMBL" id="L43967">
    <property type="protein sequence ID" value="AAC71236.1"/>
    <property type="molecule type" value="Genomic_DNA"/>
</dbReference>
<dbReference type="EMBL" id="U02229">
    <property type="protein sequence ID" value="AAA03381.1"/>
    <property type="molecule type" value="Genomic_DNA"/>
</dbReference>
<dbReference type="PIR" id="B64202">
    <property type="entry name" value="B64202"/>
</dbReference>
<dbReference type="RefSeq" id="WP_009885920.1">
    <property type="nucleotide sequence ID" value="NC_000908.2"/>
</dbReference>
<dbReference type="SMR" id="P47266"/>
<dbReference type="STRING" id="243273.MG_020"/>
<dbReference type="ESTHER" id="mycge-pip">
    <property type="family name" value="Proline_iminopeptidase"/>
</dbReference>
<dbReference type="MEROPS" id="S33.001"/>
<dbReference type="GeneID" id="88282135"/>
<dbReference type="KEGG" id="mge:MG_020"/>
<dbReference type="eggNOG" id="COG0596">
    <property type="taxonomic scope" value="Bacteria"/>
</dbReference>
<dbReference type="HOGENOM" id="CLU_043739_2_2_14"/>
<dbReference type="InParanoid" id="P47266"/>
<dbReference type="OrthoDB" id="53505at2"/>
<dbReference type="BioCyc" id="MGEN243273:G1GJ2-20-MONOMER"/>
<dbReference type="Proteomes" id="UP000000807">
    <property type="component" value="Chromosome"/>
</dbReference>
<dbReference type="GO" id="GO:0005737">
    <property type="term" value="C:cytoplasm"/>
    <property type="evidence" value="ECO:0007669"/>
    <property type="project" value="UniProtKB-SubCell"/>
</dbReference>
<dbReference type="GO" id="GO:0004177">
    <property type="term" value="F:aminopeptidase activity"/>
    <property type="evidence" value="ECO:0007669"/>
    <property type="project" value="UniProtKB-KW"/>
</dbReference>
<dbReference type="GO" id="GO:0006508">
    <property type="term" value="P:proteolysis"/>
    <property type="evidence" value="ECO:0007669"/>
    <property type="project" value="UniProtKB-KW"/>
</dbReference>
<dbReference type="Gene3D" id="3.40.50.1820">
    <property type="entry name" value="alpha/beta hydrolase"/>
    <property type="match status" value="1"/>
</dbReference>
<dbReference type="InterPro" id="IPR000073">
    <property type="entry name" value="AB_hydrolase_1"/>
</dbReference>
<dbReference type="InterPro" id="IPR029058">
    <property type="entry name" value="AB_hydrolase_fold"/>
</dbReference>
<dbReference type="InterPro" id="IPR002410">
    <property type="entry name" value="Peptidase_S33"/>
</dbReference>
<dbReference type="InterPro" id="IPR005944">
    <property type="entry name" value="Pro_iminopeptidase"/>
</dbReference>
<dbReference type="NCBIfam" id="TIGR01249">
    <property type="entry name" value="pro_imino_pep_1"/>
    <property type="match status" value="1"/>
</dbReference>
<dbReference type="PANTHER" id="PTHR43722">
    <property type="entry name" value="PROLINE IMINOPEPTIDASE"/>
    <property type="match status" value="1"/>
</dbReference>
<dbReference type="PANTHER" id="PTHR43722:SF1">
    <property type="entry name" value="PROLINE IMINOPEPTIDASE"/>
    <property type="match status" value="1"/>
</dbReference>
<dbReference type="Pfam" id="PF00561">
    <property type="entry name" value="Abhydrolase_1"/>
    <property type="match status" value="1"/>
</dbReference>
<dbReference type="PIRSF" id="PIRSF006431">
    <property type="entry name" value="Pept_S33"/>
    <property type="match status" value="1"/>
</dbReference>
<dbReference type="PRINTS" id="PR00793">
    <property type="entry name" value="PROAMNOPTASE"/>
</dbReference>
<dbReference type="SUPFAM" id="SSF53474">
    <property type="entry name" value="alpha/beta-Hydrolases"/>
    <property type="match status" value="1"/>
</dbReference>
<comment type="function">
    <text evidence="1">Specifically catalyzes the removal of N-terminal proline residues from peptides.</text>
</comment>
<comment type="catalytic activity">
    <reaction>
        <text>Release of N-terminal proline from a peptide.</text>
        <dbReference type="EC" id="3.4.11.5"/>
    </reaction>
</comment>
<comment type="subcellular location">
    <subcellularLocation>
        <location evidence="1">Cytoplasm</location>
    </subcellularLocation>
</comment>
<comment type="similarity">
    <text evidence="3">Belongs to the peptidase S33 family.</text>
</comment>
<organism>
    <name type="scientific">Mycoplasma genitalium (strain ATCC 33530 / DSM 19775 / NCTC 10195 / G37)</name>
    <name type="common">Mycoplasmoides genitalium</name>
    <dbReference type="NCBI Taxonomy" id="243273"/>
    <lineage>
        <taxon>Bacteria</taxon>
        <taxon>Bacillati</taxon>
        <taxon>Mycoplasmatota</taxon>
        <taxon>Mycoplasmoidales</taxon>
        <taxon>Mycoplasmoidaceae</taxon>
        <taxon>Mycoplasmoides</taxon>
    </lineage>
</organism>